<accession>C0HLV1</accession>
<reference evidence="4" key="1">
    <citation type="journal article" date="2020" name="J. Nat. Prod.">
        <title>Discovery of a Beetroot Protease Inhibitor to Identify and Classify Plant-Derived Cystine Knot Peptides.</title>
        <authorList>
            <person name="Retzl B."/>
            <person name="Hellinger R."/>
            <person name="Muratspahic E."/>
            <person name="Pinto M.E.F."/>
            <person name="Bolzani V.S."/>
            <person name="Gruber C.W."/>
        </authorList>
    </citation>
    <scope>PROTEIN SEQUENCE</scope>
    <scope>IDENTIFICATION BY MASS SPECTROMETRY</scope>
    <scope>SYNTHESIS</scope>
    <scope>TISSUE SPECIFICITY</scope>
    <source>
        <tissue evidence="3">Fruit flesh</tissue>
    </source>
</reference>
<evidence type="ECO:0000250" key="1">
    <source>
        <dbReference type="UniProtKB" id="P84779"/>
    </source>
</evidence>
<evidence type="ECO:0000269" key="2">
    <source>
    </source>
</evidence>
<evidence type="ECO:0000303" key="3">
    <source>
    </source>
</evidence>
<evidence type="ECO:0000305" key="4"/>
<evidence type="ECO:0000305" key="5">
    <source>
    </source>
</evidence>
<sequence>CTPSGTICSPEAPEQCCSNSCVPHQWLRIFVCA</sequence>
<feature type="peptide" id="PRO_0000452750" description="Trypsin inhibitor 1">
    <location>
        <begin position="1"/>
        <end position="33"/>
    </location>
</feature>
<feature type="site" description="Reactive bond for trypsin" evidence="1">
    <location>
        <begin position="28"/>
        <end position="29"/>
    </location>
</feature>
<feature type="disulfide bond" evidence="2">
    <location>
        <begin position="1"/>
        <end position="17"/>
    </location>
</feature>
<feature type="disulfide bond" evidence="2">
    <location>
        <begin position="8"/>
        <end position="21"/>
    </location>
</feature>
<feature type="disulfide bond" evidence="2">
    <location>
        <begin position="16"/>
        <end position="32"/>
    </location>
</feature>
<feature type="unsure residue" description="I or L" evidence="2">
    <location>
        <position position="7"/>
    </location>
</feature>
<feature type="unsure residue" description="I or L" evidence="2">
    <location>
        <position position="29"/>
    </location>
</feature>
<dbReference type="SMR" id="C0HLV1"/>
<dbReference type="GO" id="GO:0004867">
    <property type="term" value="F:serine-type endopeptidase inhibitor activity"/>
    <property type="evidence" value="ECO:0000314"/>
    <property type="project" value="UniProtKB"/>
</dbReference>
<dbReference type="GO" id="GO:0010951">
    <property type="term" value="P:negative regulation of endopeptidase activity"/>
    <property type="evidence" value="ECO:0000314"/>
    <property type="project" value="UniProtKB"/>
</dbReference>
<dbReference type="InterPro" id="IPR040875">
    <property type="entry name" value="Tryp_inh"/>
</dbReference>
<dbReference type="Pfam" id="PF17983">
    <property type="entry name" value="Tryp_inh"/>
    <property type="match status" value="1"/>
</dbReference>
<comment type="function">
    <text evidence="2">Inhibits trypsin (IC(50)=471 nM).</text>
</comment>
<comment type="tissue specificity">
    <text evidence="2">Expressed in leaves and fruit flesh (at protein level).</text>
</comment>
<comment type="domain">
    <text evidence="5">The presence of a 'disulfide through disulfide knot' structurally defines this protein as a knottin.</text>
</comment>
<comment type="mass spectrometry"/>
<comment type="similarity">
    <text evidence="4">Belongs to the Mirabilis serine proteinase inhibitor family.</text>
</comment>
<keyword id="KW-0903">Direct protein sequencing</keyword>
<keyword id="KW-1015">Disulfide bond</keyword>
<keyword id="KW-0960">Knottin</keyword>
<keyword id="KW-0646">Protease inhibitor</keyword>
<keyword id="KW-0722">Serine protease inhibitor</keyword>
<proteinExistence type="evidence at protein level"/>
<name>ITR1_BETVV</name>
<protein>
    <recommendedName>
        <fullName evidence="5">Trypsin inhibitor 1</fullName>
    </recommendedName>
    <alternativeName>
        <fullName evidence="3">BevuTI-I</fullName>
    </alternativeName>
    <alternativeName>
        <fullName evidence="3">Trypsin inhibitor I</fullName>
    </alternativeName>
</protein>
<organism evidence="3">
    <name type="scientific">Beta vulgaris subsp. vulgaris</name>
    <name type="common">Beet</name>
    <dbReference type="NCBI Taxonomy" id="3555"/>
    <lineage>
        <taxon>Eukaryota</taxon>
        <taxon>Viridiplantae</taxon>
        <taxon>Streptophyta</taxon>
        <taxon>Embryophyta</taxon>
        <taxon>Tracheophyta</taxon>
        <taxon>Spermatophyta</taxon>
        <taxon>Magnoliopsida</taxon>
        <taxon>eudicotyledons</taxon>
        <taxon>Gunneridae</taxon>
        <taxon>Pentapetalae</taxon>
        <taxon>Caryophyllales</taxon>
        <taxon>Chenopodiaceae</taxon>
        <taxon>Betoideae</taxon>
        <taxon>Beta</taxon>
    </lineage>
</organism>